<protein>
    <recommendedName>
        <fullName>Enhancer of translation termination 1</fullName>
    </recommendedName>
</protein>
<organism>
    <name type="scientific">Candida albicans (strain SC5314 / ATCC MYA-2876)</name>
    <name type="common">Yeast</name>
    <dbReference type="NCBI Taxonomy" id="237561"/>
    <lineage>
        <taxon>Eukaryota</taxon>
        <taxon>Fungi</taxon>
        <taxon>Dikarya</taxon>
        <taxon>Ascomycota</taxon>
        <taxon>Saccharomycotina</taxon>
        <taxon>Pichiomycetes</taxon>
        <taxon>Debaryomycetaceae</taxon>
        <taxon>Candida/Lodderomyces clade</taxon>
        <taxon>Candida</taxon>
    </lineage>
</organism>
<feature type="chain" id="PRO_0000406610" description="Enhancer of translation termination 1">
    <location>
        <begin position="1"/>
        <end position="421"/>
    </location>
</feature>
<feature type="region of interest" description="Disordered" evidence="2">
    <location>
        <begin position="1"/>
        <end position="43"/>
    </location>
</feature>
<feature type="region of interest" description="Disordered" evidence="2">
    <location>
        <begin position="230"/>
        <end position="259"/>
    </location>
</feature>
<feature type="compositionally biased region" description="Acidic residues" evidence="2">
    <location>
        <begin position="235"/>
        <end position="252"/>
    </location>
</feature>
<keyword id="KW-0539">Nucleus</keyword>
<keyword id="KW-1185">Reference proteome</keyword>
<keyword id="KW-0804">Transcription</keyword>
<keyword id="KW-0805">Transcription regulation</keyword>
<keyword id="KW-0810">Translation regulation</keyword>
<accession>Q5A0J9</accession>
<accession>A0A1D8PGR2</accession>
<proteinExistence type="inferred from homology"/>
<evidence type="ECO:0000250" key="1"/>
<evidence type="ECO:0000256" key="2">
    <source>
        <dbReference type="SAM" id="MobiDB-lite"/>
    </source>
</evidence>
<evidence type="ECO:0000305" key="3"/>
<comment type="function">
    <text evidence="1">Required for correct translation termination and probably involved in regulation of hypoxic gene expression.</text>
</comment>
<comment type="subcellular location">
    <subcellularLocation>
        <location evidence="1">Nucleus</location>
    </subcellularLocation>
</comment>
<comment type="similarity">
    <text evidence="3">Belongs to the ETT1 family.</text>
</comment>
<gene>
    <name type="primary">ETT1</name>
    <name type="ordered locus">CAALFM_C202930CA</name>
    <name type="ORF">CaO19.13234</name>
    <name type="ORF">CaO19.5812</name>
</gene>
<reference key="1">
    <citation type="journal article" date="2004" name="Proc. Natl. Acad. Sci. U.S.A.">
        <title>The diploid genome sequence of Candida albicans.</title>
        <authorList>
            <person name="Jones T."/>
            <person name="Federspiel N.A."/>
            <person name="Chibana H."/>
            <person name="Dungan J."/>
            <person name="Kalman S."/>
            <person name="Magee B.B."/>
            <person name="Newport G."/>
            <person name="Thorstenson Y.R."/>
            <person name="Agabian N."/>
            <person name="Magee P.T."/>
            <person name="Davis R.W."/>
            <person name="Scherer S."/>
        </authorList>
    </citation>
    <scope>NUCLEOTIDE SEQUENCE [LARGE SCALE GENOMIC DNA]</scope>
    <source>
        <strain>SC5314 / ATCC MYA-2876</strain>
    </source>
</reference>
<reference key="2">
    <citation type="journal article" date="2007" name="Genome Biol.">
        <title>Assembly of the Candida albicans genome into sixteen supercontigs aligned on the eight chromosomes.</title>
        <authorList>
            <person name="van het Hoog M."/>
            <person name="Rast T.J."/>
            <person name="Martchenko M."/>
            <person name="Grindle S."/>
            <person name="Dignard D."/>
            <person name="Hogues H."/>
            <person name="Cuomo C."/>
            <person name="Berriman M."/>
            <person name="Scherer S."/>
            <person name="Magee B.B."/>
            <person name="Whiteway M."/>
            <person name="Chibana H."/>
            <person name="Nantel A."/>
            <person name="Magee P.T."/>
        </authorList>
    </citation>
    <scope>GENOME REANNOTATION</scope>
    <source>
        <strain>SC5314 / ATCC MYA-2876</strain>
    </source>
</reference>
<reference key="3">
    <citation type="journal article" date="2013" name="Genome Biol.">
        <title>Assembly of a phased diploid Candida albicans genome facilitates allele-specific measurements and provides a simple model for repeat and indel structure.</title>
        <authorList>
            <person name="Muzzey D."/>
            <person name="Schwartz K."/>
            <person name="Weissman J.S."/>
            <person name="Sherlock G."/>
        </authorList>
    </citation>
    <scope>NUCLEOTIDE SEQUENCE [LARGE SCALE GENOMIC DNA]</scope>
    <scope>GENOME REANNOTATION</scope>
    <source>
        <strain>SC5314 / ATCC MYA-2876</strain>
    </source>
</reference>
<dbReference type="EMBL" id="CP017624">
    <property type="protein sequence ID" value="AOW27330.1"/>
    <property type="molecule type" value="Genomic_DNA"/>
</dbReference>
<dbReference type="RefSeq" id="XP_715353.1">
    <property type="nucleotide sequence ID" value="XM_710260.2"/>
</dbReference>
<dbReference type="SMR" id="Q5A0J9"/>
<dbReference type="FunCoup" id="Q5A0J9">
    <property type="interactions" value="107"/>
</dbReference>
<dbReference type="STRING" id="237561.Q5A0J9"/>
<dbReference type="EnsemblFungi" id="C2_02930C_A-T">
    <property type="protein sequence ID" value="C2_02930C_A-T-p1"/>
    <property type="gene ID" value="C2_02930C_A"/>
</dbReference>
<dbReference type="GeneID" id="3643015"/>
<dbReference type="KEGG" id="cal:CAALFM_C202930CA"/>
<dbReference type="CGD" id="CAL0000200223">
    <property type="gene designation" value="orf19.13234"/>
</dbReference>
<dbReference type="VEuPathDB" id="FungiDB:C2_02930C_A"/>
<dbReference type="eggNOG" id="ENOG502QPHX">
    <property type="taxonomic scope" value="Eukaryota"/>
</dbReference>
<dbReference type="HOGENOM" id="CLU_050427_0_0_1"/>
<dbReference type="InParanoid" id="Q5A0J9"/>
<dbReference type="OrthoDB" id="5598057at2759"/>
<dbReference type="PRO" id="PR:Q5A0J9"/>
<dbReference type="Proteomes" id="UP000000559">
    <property type="component" value="Chromosome 2"/>
</dbReference>
<dbReference type="GO" id="GO:0005634">
    <property type="term" value="C:nucleus"/>
    <property type="evidence" value="ECO:0000318"/>
    <property type="project" value="GO_Central"/>
</dbReference>
<dbReference type="GO" id="GO:2000640">
    <property type="term" value="P:positive regulation of SREBP signaling pathway"/>
    <property type="evidence" value="ECO:0000318"/>
    <property type="project" value="GO_Central"/>
</dbReference>
<dbReference type="GO" id="GO:0006417">
    <property type="term" value="P:regulation of translation"/>
    <property type="evidence" value="ECO:0007669"/>
    <property type="project" value="UniProtKB-KW"/>
</dbReference>
<dbReference type="InterPro" id="IPR024318">
    <property type="entry name" value="Nro1/ETT1"/>
</dbReference>
<dbReference type="PANTHER" id="PTHR28290">
    <property type="entry name" value="ENHANCER OF TRANSLATION TERMINATION 1"/>
    <property type="match status" value="1"/>
</dbReference>
<dbReference type="PANTHER" id="PTHR28290:SF1">
    <property type="entry name" value="ENHANCER OF TRANSLATION TERMINATION 1"/>
    <property type="match status" value="1"/>
</dbReference>
<dbReference type="Pfam" id="PF12753">
    <property type="entry name" value="Nro1"/>
    <property type="match status" value="1"/>
</dbReference>
<name>ETT1_CANAL</name>
<sequence>MAKRTLGLAKAAKAKKQKKEQEHQESSASPDEESSSSNQLTIELPEEIDANDEISQLKGLHKTYLQSERDNELLVNGIIHECDRLLRENDSENKQPLPAVFHAIYAIALAELSKFHTEELDKVKEFFIAALERVESGLEKNPNDINLLVAKTKILLDQISLQYIAPLTLESDVKELDKEIDELLDAALSVYESVEARAKELKDYSIFDDSETLDILEALDDILDIVDNFGKENQGDDGSDEDDEEDDDEEEKSVELAETHPLYKIKNSDKYDQWWRDHTHLYLDNLEKLENGSPELKREVCHRLGQSYLQESEVPYSVFTKLKYDDEYDGIEELEGLTEKEAQKISQELITKALDYLKQAKDEEDPETWVSIAEAMISLGNLYEVDSKEQEDLYLEAEKILKRANNVTNGKFQEELDNLLP</sequence>